<organism>
    <name type="scientific">Escherichia coli (strain K12)</name>
    <dbReference type="NCBI Taxonomy" id="83333"/>
    <lineage>
        <taxon>Bacteria</taxon>
        <taxon>Pseudomonadati</taxon>
        <taxon>Pseudomonadota</taxon>
        <taxon>Gammaproteobacteria</taxon>
        <taxon>Enterobacterales</taxon>
        <taxon>Enterobacteriaceae</taxon>
        <taxon>Escherichia</taxon>
    </lineage>
</organism>
<name>G6PD_ECOLI</name>
<feature type="chain" id="PRO_0000068118" description="Glucose-6-phosphate 1-dehydrogenase">
    <location>
        <begin position="1"/>
        <end position="491"/>
    </location>
</feature>
<feature type="chain" id="PRO_0000404298" description="Extracellular death factor">
    <location>
        <begin position="199"/>
        <end position="203"/>
    </location>
</feature>
<feature type="active site" description="Proton acceptor" evidence="1">
    <location>
        <position position="239"/>
    </location>
</feature>
<feature type="binding site" evidence="1">
    <location>
        <position position="50"/>
    </location>
    <ligand>
        <name>NADP(+)</name>
        <dbReference type="ChEBI" id="CHEBI:58349"/>
    </ligand>
</feature>
<feature type="binding site" evidence="1">
    <location>
        <begin position="92"/>
        <end position="93"/>
    </location>
    <ligand>
        <name>NADP(+)</name>
        <dbReference type="ChEBI" id="CHEBI:58349"/>
    </ligand>
</feature>
<feature type="binding site" evidence="1">
    <location>
        <position position="147"/>
    </location>
    <ligand>
        <name>NADP(+)</name>
        <dbReference type="ChEBI" id="CHEBI:58349"/>
    </ligand>
</feature>
<feature type="binding site" evidence="1">
    <location>
        <position position="177"/>
    </location>
    <ligand>
        <name>substrate</name>
    </ligand>
</feature>
<feature type="binding site" evidence="1">
    <location>
        <position position="181"/>
    </location>
    <ligand>
        <name>substrate</name>
    </ligand>
</feature>
<feature type="binding site" evidence="1">
    <location>
        <position position="215"/>
    </location>
    <ligand>
        <name>substrate</name>
    </ligand>
</feature>
<feature type="binding site" evidence="1">
    <location>
        <position position="234"/>
    </location>
    <ligand>
        <name>substrate</name>
    </ligand>
</feature>
<feature type="binding site" evidence="1">
    <location>
        <position position="339"/>
    </location>
    <ligand>
        <name>substrate</name>
    </ligand>
</feature>
<feature type="binding site" evidence="1">
    <location>
        <position position="344"/>
    </location>
    <ligand>
        <name>substrate</name>
    </ligand>
</feature>
<feature type="sequence variant" description="In strain: ECOR 4 and ECOR 10.">
    <original>S</original>
    <variation>N</variation>
    <location>
        <position position="100"/>
    </location>
</feature>
<feature type="sequence conflict" description="In Ref. 1; AAA24775." evidence="7" ref="1">
    <original>LKSLRRIDRSNVREKTVRGQYTAGFA</original>
    <variation>PEVSSPHRPLQRTRKNRTRAIYCVP</variation>
    <location>
        <begin position="268"/>
        <end position="293"/>
    </location>
</feature>
<gene>
    <name evidence="1" type="primary">zwf</name>
    <name type="ordered locus">b1852</name>
    <name type="ordered locus">JW1841</name>
</gene>
<evidence type="ECO:0000255" key="1">
    <source>
        <dbReference type="HAMAP-Rule" id="MF_00966"/>
    </source>
</evidence>
<evidence type="ECO:0000269" key="2">
    <source>
    </source>
</evidence>
<evidence type="ECO:0000269" key="3">
    <source>
    </source>
</evidence>
<evidence type="ECO:0000269" key="4">
    <source>
    </source>
</evidence>
<evidence type="ECO:0000269" key="5">
    <source>
    </source>
</evidence>
<evidence type="ECO:0000303" key="6">
    <source>
    </source>
</evidence>
<evidence type="ECO:0000305" key="7"/>
<evidence type="ECO:0000305" key="8">
    <source>
    </source>
</evidence>
<evidence type="ECO:0000305" key="9">
    <source>
    </source>
</evidence>
<proteinExistence type="evidence at protein level"/>
<dbReference type="EC" id="1.1.1.49" evidence="1"/>
<dbReference type="EMBL" id="M55005">
    <property type="protein sequence ID" value="AAA24775.1"/>
    <property type="molecule type" value="Genomic_DNA"/>
</dbReference>
<dbReference type="EMBL" id="U00096">
    <property type="protein sequence ID" value="AAC74922.1"/>
    <property type="molecule type" value="Genomic_DNA"/>
</dbReference>
<dbReference type="EMBL" id="AP009048">
    <property type="protein sequence ID" value="BAA15660.1"/>
    <property type="molecule type" value="Genomic_DNA"/>
</dbReference>
<dbReference type="EMBL" id="U13783">
    <property type="protein sequence ID" value="AAA57018.1"/>
    <property type="molecule type" value="Genomic_DNA"/>
</dbReference>
<dbReference type="EMBL" id="U13784">
    <property type="protein sequence ID" value="AAA57019.1"/>
    <property type="molecule type" value="Genomic_DNA"/>
</dbReference>
<dbReference type="EMBL" id="U13785">
    <property type="protein sequence ID" value="AAA57020.1"/>
    <property type="molecule type" value="Genomic_DNA"/>
</dbReference>
<dbReference type="EMBL" id="U13786">
    <property type="protein sequence ID" value="AAA57021.1"/>
    <property type="molecule type" value="Genomic_DNA"/>
</dbReference>
<dbReference type="EMBL" id="U13787">
    <property type="protein sequence ID" value="AAA57022.1"/>
    <property type="molecule type" value="Genomic_DNA"/>
</dbReference>
<dbReference type="EMBL" id="U13788">
    <property type="protein sequence ID" value="AAA57023.1"/>
    <property type="molecule type" value="Genomic_DNA"/>
</dbReference>
<dbReference type="EMBL" id="U13789">
    <property type="protein sequence ID" value="AAA57024.1"/>
    <property type="molecule type" value="Genomic_DNA"/>
</dbReference>
<dbReference type="EMBL" id="U13790">
    <property type="protein sequence ID" value="AAA57025.1"/>
    <property type="molecule type" value="Genomic_DNA"/>
</dbReference>
<dbReference type="EMBL" id="U13791">
    <property type="protein sequence ID" value="AAA57026.1"/>
    <property type="molecule type" value="Genomic_DNA"/>
</dbReference>
<dbReference type="EMBL" id="U13792">
    <property type="protein sequence ID" value="AAA57027.1"/>
    <property type="molecule type" value="Genomic_DNA"/>
</dbReference>
<dbReference type="EMBL" id="U13793">
    <property type="protein sequence ID" value="AAA57028.1"/>
    <property type="molecule type" value="Genomic_DNA"/>
</dbReference>
<dbReference type="EMBL" id="U13794">
    <property type="protein sequence ID" value="AAA57029.1"/>
    <property type="molecule type" value="Genomic_DNA"/>
</dbReference>
<dbReference type="EMBL" id="X63694">
    <property type="protein sequence ID" value="CAA45220.1"/>
    <property type="molecule type" value="Genomic_DNA"/>
</dbReference>
<dbReference type="PIR" id="D64947">
    <property type="entry name" value="D64947"/>
</dbReference>
<dbReference type="RefSeq" id="NP_416366.1">
    <property type="nucleotide sequence ID" value="NC_000913.3"/>
</dbReference>
<dbReference type="RefSeq" id="WP_000301727.1">
    <property type="nucleotide sequence ID" value="NZ_STEB01000009.1"/>
</dbReference>
<dbReference type="SMR" id="P0AC53"/>
<dbReference type="BioGRID" id="4259154">
    <property type="interactions" value="80"/>
</dbReference>
<dbReference type="BioGRID" id="850727">
    <property type="interactions" value="1"/>
</dbReference>
<dbReference type="DIP" id="DIP-35780N"/>
<dbReference type="FunCoup" id="P0AC53">
    <property type="interactions" value="713"/>
</dbReference>
<dbReference type="IntAct" id="P0AC53">
    <property type="interactions" value="48"/>
</dbReference>
<dbReference type="MINT" id="P0AC53"/>
<dbReference type="STRING" id="511145.b1852"/>
<dbReference type="jPOST" id="P0AC53"/>
<dbReference type="PaxDb" id="511145-b1852"/>
<dbReference type="EnsemblBacteria" id="AAC74922">
    <property type="protein sequence ID" value="AAC74922"/>
    <property type="gene ID" value="b1852"/>
</dbReference>
<dbReference type="GeneID" id="86859388"/>
<dbReference type="GeneID" id="946370"/>
<dbReference type="KEGG" id="ecj:JW1841"/>
<dbReference type="KEGG" id="eco:b1852"/>
<dbReference type="KEGG" id="ecoc:C3026_10550"/>
<dbReference type="PATRIC" id="fig|1411691.4.peg.397"/>
<dbReference type="EchoBASE" id="EB1203"/>
<dbReference type="eggNOG" id="COG0364">
    <property type="taxonomic scope" value="Bacteria"/>
</dbReference>
<dbReference type="HOGENOM" id="CLU_013524_5_0_6"/>
<dbReference type="InParanoid" id="P0AC53"/>
<dbReference type="OMA" id="ERAGYYE"/>
<dbReference type="OrthoDB" id="9802739at2"/>
<dbReference type="PhylomeDB" id="P0AC53"/>
<dbReference type="BioCyc" id="EcoCyc:GLU6PDEHYDROG-MONOMER"/>
<dbReference type="BioCyc" id="MetaCyc:GLU6PDEHYDROG-MONOMER"/>
<dbReference type="SABIO-RK" id="P0AC53"/>
<dbReference type="UniPathway" id="UPA00115">
    <property type="reaction ID" value="UER00408"/>
</dbReference>
<dbReference type="PRO" id="PR:P0AC53"/>
<dbReference type="Proteomes" id="UP000000625">
    <property type="component" value="Chromosome"/>
</dbReference>
<dbReference type="GO" id="GO:0005829">
    <property type="term" value="C:cytosol"/>
    <property type="evidence" value="ECO:0000314"/>
    <property type="project" value="EcoCyc"/>
</dbReference>
<dbReference type="GO" id="GO:0004345">
    <property type="term" value="F:glucose-6-phosphate dehydrogenase activity"/>
    <property type="evidence" value="ECO:0000314"/>
    <property type="project" value="EcoCyc"/>
</dbReference>
<dbReference type="GO" id="GO:0042802">
    <property type="term" value="F:identical protein binding"/>
    <property type="evidence" value="ECO:0000353"/>
    <property type="project" value="IntAct"/>
</dbReference>
<dbReference type="GO" id="GO:0050661">
    <property type="term" value="F:NADP binding"/>
    <property type="evidence" value="ECO:0007669"/>
    <property type="project" value="UniProtKB-UniRule"/>
</dbReference>
<dbReference type="GO" id="GO:0006006">
    <property type="term" value="P:glucose metabolic process"/>
    <property type="evidence" value="ECO:0000315"/>
    <property type="project" value="EcoCyc"/>
</dbReference>
<dbReference type="GO" id="GO:0006098">
    <property type="term" value="P:pentose-phosphate shunt"/>
    <property type="evidence" value="ECO:0000315"/>
    <property type="project" value="EcoCyc"/>
</dbReference>
<dbReference type="GO" id="GO:0009051">
    <property type="term" value="P:pentose-phosphate shunt, oxidative branch"/>
    <property type="evidence" value="ECO:0000318"/>
    <property type="project" value="GO_Central"/>
</dbReference>
<dbReference type="GO" id="GO:0009372">
    <property type="term" value="P:quorum sensing"/>
    <property type="evidence" value="ECO:0000315"/>
    <property type="project" value="EcoCyc"/>
</dbReference>
<dbReference type="FunFam" id="3.30.360.10:FF:000011">
    <property type="entry name" value="Glucose-6-phosphate 1-dehydrogenase"/>
    <property type="match status" value="1"/>
</dbReference>
<dbReference type="FunFam" id="3.40.50.720:FF:000079">
    <property type="entry name" value="Glucose-6-phosphate 1-dehydrogenase"/>
    <property type="match status" value="1"/>
</dbReference>
<dbReference type="Gene3D" id="3.30.360.10">
    <property type="entry name" value="Dihydrodipicolinate Reductase, domain 2"/>
    <property type="match status" value="1"/>
</dbReference>
<dbReference type="Gene3D" id="3.40.50.720">
    <property type="entry name" value="NAD(P)-binding Rossmann-like Domain"/>
    <property type="match status" value="1"/>
</dbReference>
<dbReference type="HAMAP" id="MF_00966">
    <property type="entry name" value="G6PD"/>
    <property type="match status" value="1"/>
</dbReference>
<dbReference type="InterPro" id="IPR001282">
    <property type="entry name" value="G6P_DH"/>
</dbReference>
<dbReference type="InterPro" id="IPR019796">
    <property type="entry name" value="G6P_DH_AS"/>
</dbReference>
<dbReference type="InterPro" id="IPR022675">
    <property type="entry name" value="G6P_DH_C"/>
</dbReference>
<dbReference type="InterPro" id="IPR022674">
    <property type="entry name" value="G6P_DH_NAD-bd"/>
</dbReference>
<dbReference type="InterPro" id="IPR036291">
    <property type="entry name" value="NAD(P)-bd_dom_sf"/>
</dbReference>
<dbReference type="NCBIfam" id="NF009492">
    <property type="entry name" value="PRK12853.1-3"/>
    <property type="match status" value="1"/>
</dbReference>
<dbReference type="NCBIfam" id="TIGR00871">
    <property type="entry name" value="zwf"/>
    <property type="match status" value="1"/>
</dbReference>
<dbReference type="PANTHER" id="PTHR23429:SF0">
    <property type="entry name" value="GLUCOSE-6-PHOSPHATE 1-DEHYDROGENASE"/>
    <property type="match status" value="1"/>
</dbReference>
<dbReference type="PANTHER" id="PTHR23429">
    <property type="entry name" value="GLUCOSE-6-PHOSPHATE 1-DEHYDROGENASE G6PD"/>
    <property type="match status" value="1"/>
</dbReference>
<dbReference type="Pfam" id="PF02781">
    <property type="entry name" value="G6PD_C"/>
    <property type="match status" value="1"/>
</dbReference>
<dbReference type="Pfam" id="PF00479">
    <property type="entry name" value="G6PD_N"/>
    <property type="match status" value="1"/>
</dbReference>
<dbReference type="PIRSF" id="PIRSF000110">
    <property type="entry name" value="G6PD"/>
    <property type="match status" value="1"/>
</dbReference>
<dbReference type="PRINTS" id="PR00079">
    <property type="entry name" value="G6PDHDRGNASE"/>
</dbReference>
<dbReference type="SUPFAM" id="SSF55347">
    <property type="entry name" value="Glyceraldehyde-3-phosphate dehydrogenase-like, C-terminal domain"/>
    <property type="match status" value="1"/>
</dbReference>
<dbReference type="SUPFAM" id="SSF51735">
    <property type="entry name" value="NAD(P)-binding Rossmann-fold domains"/>
    <property type="match status" value="1"/>
</dbReference>
<dbReference type="PROSITE" id="PS00069">
    <property type="entry name" value="G6P_DEHYDROGENASE"/>
    <property type="match status" value="1"/>
</dbReference>
<comment type="function">
    <text evidence="1 2 3">Catalyzes the oxidation of glucose 6-phosphate to 6-phosphogluconolactone.</text>
</comment>
<comment type="function">
    <text evidence="3 4">Probable source of extracellular death factor (EDF, sequence Asn-Asn-Trp-Asn-Asn, NNWNN) following processing and amidation. This pentapeptide stimulates cell death mediated by MazF (PubMed:17962566). Artificial peptides with altered sequence show that NNGNN, GNWNG and NWN no longer stimulate MazF's endoribonuclease activity; other peptides (NNGN, GNWMM, NNWNG, NNNWNNN) retain MazF-stimulating activity. NNWNN, NNGN, GNWMM and NNWNG prevent cognate antitoxin MazE from inhibiting MazF; although NNNWNNN stimulates MazF it does not do so in the presence of MazE. EDF also stimulates ChpB's endoribonuclease activity in vitro; in this case NWN partially stimulates ChpB, whereas NNGNN, GNWNN, NNWNG, GNWNG and NNNWNNN do not. Only the wild-type EDF peptide prevents cognate antitoxin ChpS from inhibiting ChpB (PubMed:21419338).</text>
</comment>
<comment type="catalytic activity">
    <reaction evidence="1">
        <text>D-glucose 6-phosphate + NADP(+) = 6-phospho-D-glucono-1,5-lactone + NADPH + H(+)</text>
        <dbReference type="Rhea" id="RHEA:15841"/>
        <dbReference type="ChEBI" id="CHEBI:15378"/>
        <dbReference type="ChEBI" id="CHEBI:57783"/>
        <dbReference type="ChEBI" id="CHEBI:57955"/>
        <dbReference type="ChEBI" id="CHEBI:58349"/>
        <dbReference type="ChEBI" id="CHEBI:61548"/>
        <dbReference type="EC" id="1.1.1.49"/>
    </reaction>
</comment>
<comment type="pathway">
    <text evidence="1 2">Carbohydrate degradation; pentose phosphate pathway; D-ribulose 5-phosphate from D-glucose 6-phosphate (oxidative stage): step 1/3.</text>
</comment>
<comment type="subunit">
    <text evidence="4 5">EDF binds to MazF; mutated EDF (sequence NNGNN) does not (PubMed:21419338). In pull-down experiments interacts with CedA (PubMed:28818726).</text>
</comment>
<comment type="interaction">
    <interactant intactId="EBI-555656">
        <id>P0AC53</id>
    </interactant>
    <interactant intactId="EBI-542385">
        <id>P0A988</id>
        <label>dnaN</label>
    </interactant>
    <organismsDiffer>false</organismsDiffer>
    <experiments>2</experiments>
</comment>
<comment type="interaction">
    <interactant intactId="EBI-555656">
        <id>P0AC53</id>
    </interactant>
    <interactant intactId="EBI-555656">
        <id>P0AC53</id>
        <label>zwf</label>
    </interactant>
    <organismsDiffer>false</organismsDiffer>
    <experiments>2</experiments>
</comment>
<comment type="PTM">
    <text evidence="8">Probably processed by the ClpPX protease to generate the extracellular death factor (EDF). It is thought that processing produces Asn-Asn-Trp-Asp-Asn which is amidated to generate Asn-Asn-Trp-Asn-Asn (Probable).</text>
</comment>
<comment type="disruption phenotype">
    <text evidence="3">Loss of production of extracellular death factor.</text>
</comment>
<comment type="similarity">
    <text evidence="1">Belongs to the glucose-6-phosphate dehydrogenase family.</text>
</comment>
<comment type="caution">
    <text evidence="9">Strain K12 / MG1655 is deficient in both production and response to EDF, unlike strains K12 / MC4100, K12 / W3110 and K12 / K38, all of which make and respond to EDF.</text>
</comment>
<keyword id="KW-0119">Carbohydrate metabolism</keyword>
<keyword id="KW-0313">Glucose metabolism</keyword>
<keyword id="KW-0521">NADP</keyword>
<keyword id="KW-0560">Oxidoreductase</keyword>
<keyword id="KW-0673">Quorum sensing</keyword>
<keyword id="KW-1185">Reference proteome</keyword>
<accession>P0AC53</accession>
<accession>P22992</accession>
<accession>P78069</accession>
<accession>Q60134</accession>
<accession>Q60139</accession>
<reference key="1">
    <citation type="journal article" date="1991" name="J. Bacteriol.">
        <title>Molecular characterization of the Escherichia coli K-12 zwf gene encoding glucose 6-phosphate dehydrogenase.</title>
        <authorList>
            <person name="Rowley D.L."/>
            <person name="Wolf R.E. Jr."/>
        </authorList>
    </citation>
    <scope>NUCLEOTIDE SEQUENCE [GENOMIC DNA]</scope>
    <source>
        <strain>K12</strain>
    </source>
</reference>
<reference key="2">
    <citation type="journal article" date="1996" name="DNA Res.">
        <title>A 460-kb DNA sequence of the Escherichia coli K-12 genome corresponding to the 40.1-50.0 min region on the linkage map.</title>
        <authorList>
            <person name="Itoh T."/>
            <person name="Aiba H."/>
            <person name="Baba T."/>
            <person name="Fujita K."/>
            <person name="Hayashi K."/>
            <person name="Inada T."/>
            <person name="Isono K."/>
            <person name="Kasai H."/>
            <person name="Kimura S."/>
            <person name="Kitakawa M."/>
            <person name="Kitagawa M."/>
            <person name="Makino K."/>
            <person name="Miki T."/>
            <person name="Mizobuchi K."/>
            <person name="Mori H."/>
            <person name="Mori T."/>
            <person name="Motomura K."/>
            <person name="Nakade S."/>
            <person name="Nakamura Y."/>
            <person name="Nashimoto H."/>
            <person name="Nishio Y."/>
            <person name="Oshima T."/>
            <person name="Saito N."/>
            <person name="Sampei G."/>
            <person name="Seki Y."/>
            <person name="Sivasundaram S."/>
            <person name="Tagami H."/>
            <person name="Takeda J."/>
            <person name="Takemoto K."/>
            <person name="Wada C."/>
            <person name="Yamamoto Y."/>
            <person name="Horiuchi T."/>
        </authorList>
    </citation>
    <scope>NUCLEOTIDE SEQUENCE [LARGE SCALE GENOMIC DNA]</scope>
    <source>
        <strain>K12 / W3110 / ATCC 27325 / DSM 5911</strain>
    </source>
</reference>
<reference key="3">
    <citation type="journal article" date="1997" name="Science">
        <title>The complete genome sequence of Escherichia coli K-12.</title>
        <authorList>
            <person name="Blattner F.R."/>
            <person name="Plunkett G. III"/>
            <person name="Bloch C.A."/>
            <person name="Perna N.T."/>
            <person name="Burland V."/>
            <person name="Riley M."/>
            <person name="Collado-Vides J."/>
            <person name="Glasner J.D."/>
            <person name="Rode C.K."/>
            <person name="Mayhew G.F."/>
            <person name="Gregor J."/>
            <person name="Davis N.W."/>
            <person name="Kirkpatrick H.A."/>
            <person name="Goeden M.A."/>
            <person name="Rose D.J."/>
            <person name="Mau B."/>
            <person name="Shao Y."/>
        </authorList>
    </citation>
    <scope>NUCLEOTIDE SEQUENCE [LARGE SCALE GENOMIC DNA]</scope>
    <source>
        <strain>K12 / MG1655 / ATCC 47076</strain>
    </source>
</reference>
<reference key="4">
    <citation type="journal article" date="2006" name="Mol. Syst. Biol.">
        <title>Highly accurate genome sequences of Escherichia coli K-12 strains MG1655 and W3110.</title>
        <authorList>
            <person name="Hayashi K."/>
            <person name="Morooka N."/>
            <person name="Yamamoto Y."/>
            <person name="Fujita K."/>
            <person name="Isono K."/>
            <person name="Choi S."/>
            <person name="Ohtsubo E."/>
            <person name="Baba T."/>
            <person name="Wanner B.L."/>
            <person name="Mori H."/>
            <person name="Horiuchi T."/>
        </authorList>
    </citation>
    <scope>NUCLEOTIDE SEQUENCE [LARGE SCALE GENOMIC DNA]</scope>
    <source>
        <strain>K12 / W3110 / ATCC 27325 / DSM 5911</strain>
    </source>
</reference>
<reference key="5">
    <citation type="journal article" date="1994" name="Science">
        <title>Clonal divergence in Escherichia coli as a result of recombination, not mutation.</title>
        <authorList>
            <person name="Guttman D.S."/>
            <person name="Dykhuizen D.E."/>
        </authorList>
    </citation>
    <scope>NUCLEOTIDE SEQUENCE [GENOMIC DNA] OF 72-368</scope>
    <source>
        <strain>Various ECOR strains</strain>
    </source>
</reference>
<reference key="6">
    <citation type="journal article" date="1993" name="Gene">
        <title>Sequence of the Escherichia coli K-12 edd and eda genes of the Entner-Doudoroff pathway.</title>
        <authorList>
            <person name="Carter A.T."/>
            <person name="Pearson B.M."/>
            <person name="Dickinson J.R."/>
            <person name="Lancashire W.E."/>
        </authorList>
    </citation>
    <scope>NUCLEOTIDE SEQUENCE [GENOMIC DNA] OF 321-491</scope>
    <source>
        <strain>K12</strain>
    </source>
</reference>
<reference key="7">
    <citation type="journal article" date="1997" name="Electrophoresis">
        <title>Escherichia coli proteome analysis using the gene-protein database.</title>
        <authorList>
            <person name="VanBogelen R.A."/>
            <person name="Abshire K.Z."/>
            <person name="Moldover B."/>
            <person name="Olson E.R."/>
            <person name="Neidhardt F.C."/>
        </authorList>
    </citation>
    <scope>IDENTIFICATION BY 2D-GEL</scope>
</reference>
<reference key="8">
    <citation type="journal article" date="2004" name="Metab. Eng.">
        <title>Effect of zwf gene knockout on the metabolism of Escherichia coli grown on glucose or acetate.</title>
        <authorList>
            <person name="Zhao J."/>
            <person name="Baba T."/>
            <person name="Mori H."/>
            <person name="Shimizu K."/>
        </authorList>
    </citation>
    <scope>FUNCTION</scope>
    <scope>PATHWAY</scope>
    <source>
        <strain>K12 / BW25113</strain>
    </source>
</reference>
<reference key="9">
    <citation type="journal article" date="2007" name="Science">
        <title>A linear pentapeptide is a quorum-sensing factor required for mazEF-mediated cell death in Escherichia coli.</title>
        <authorList>
            <person name="Kolodkin-Gal I."/>
            <person name="Hazan R."/>
            <person name="Gaathon A."/>
            <person name="Carmeli S."/>
            <person name="Engelberg-Kulka H."/>
        </authorList>
    </citation>
    <scope>FUNCTION AS EXTRACELLULAR DEATH FACTOR (EDF)</scope>
    <scope>POSSIBLE PROTEOLYTIC PROCESSING</scope>
    <scope>DISRUPTION PHENOTYPE</scope>
    <source>
        <strain>K12 / MC4100 / ATCC 35695 / DSM 6574</strain>
    </source>
</reference>
<reference key="10">
    <citation type="journal article" date="2008" name="J. Bacteriol.">
        <title>The extracellular death factor: physiological and genetic factors influencing its production and response in Escherichia coli.</title>
        <authorList>
            <person name="Kolodkin-Gal I."/>
            <person name="Engelberg-Kulka H."/>
        </authorList>
    </citation>
    <scope>EDF PRODUCTION</scope>
    <scope>STRAIN DIFFERENCES IN ABILITY TO MAKE AND RESPOND TO EDF</scope>
    <source>
        <strain>K12 / K38 / S26</strain>
        <strain>K12 / MC4100 / ATCC 35695 / DSM 6574</strain>
        <strain>K12 / MG1655 / ATCC 47076</strain>
        <strain>K12 / W3110</strain>
    </source>
</reference>
<reference key="11">
    <citation type="journal article" date="2011" name="Mol. Cell">
        <title>The Escherichia coli extracellular death factor EDF induces the endoribonucleolytic activities of the toxins MazF and ChpBK.</title>
        <authorList>
            <person name="Belitsky M."/>
            <person name="Avshalom H."/>
            <person name="Erental A."/>
            <person name="Yelin I."/>
            <person name="Kumar S."/>
            <person name="London N."/>
            <person name="Sperber M."/>
            <person name="Schueler-Furman O."/>
            <person name="Engelberg-Kulka H."/>
        </authorList>
    </citation>
    <scope>FUNCTION AS EDF</scope>
    <scope>INTERACTION OF EDF WITH MAZF</scope>
    <scope>SUBUNIT</scope>
</reference>
<reference key="12">
    <citation type="journal article" date="2018" name="Int. J. Biol. Macromol.">
        <title>Identification of functional interactome of a key cell division regulatory protein CedA of E.coli.</title>
        <authorList>
            <person name="Sharma P."/>
            <person name="Tomar A.K."/>
            <person name="Kundu B."/>
        </authorList>
    </citation>
    <scope>INTERACTION WITH CEDA</scope>
</reference>
<sequence>MAVTQTAQACDLVIFGAKGDLARRKLLPSLYQLEKAGQLNPDTRIIGVGRADWDKAAYTKVVREALETFMKETIDEGLWDTLSARLDFCNLDVNDTAAFSRLGAMLDQKNRITINYFAMPPSTFGAICKGLGEAKLNAKPARVVMEKPLGTSLATSQEINDQVGEYFEECQVYRIDHYLGKETVLNLLALRFANSLFVNNWDNRTIDHVEITVAEEVGIEGRWGYFDKAGQMRDMIQNHLLQILCMIAMSPPSDLSADSIRDEKVKVLKSLRRIDRSNVREKTVRGQYTAGFAQGKKVPGYLEEEGANKSSNTETFVAIRVDIDNWRWAGVPFYLRTGKRLPTKCSEVVVYFKTPELNLFKESWQDLPQNKLTIRLQPDEGVDIQVLNKVPGLDHKHNLQITKLDLSYSETFNQTHLADAYERLLLETMRGIQALFVRRDEVEEAWKWVDSITEAWAMDNDAPKPYQAGTWGPVASVAMITRDGRSWNEFE</sequence>
<protein>
    <recommendedName>
        <fullName evidence="1">Glucose-6-phosphate 1-dehydrogenase</fullName>
        <shortName evidence="1">G6PD</shortName>
        <ecNumber evidence="1">1.1.1.49</ecNumber>
    </recommendedName>
    <component>
        <recommendedName>
            <fullName evidence="6">Extracellular death factor</fullName>
            <shortName>EDF</shortName>
        </recommendedName>
    </component>
</protein>